<dbReference type="PDB" id="6CFZ">
    <property type="method" value="EM"/>
    <property type="resolution" value="4.50 A"/>
    <property type="chains" value="G=22-77"/>
</dbReference>
<dbReference type="PDBsum" id="6CFZ"/>
<dbReference type="EMDB" id="EMD-7469"/>
<dbReference type="SMR" id="C0HM97"/>
<dbReference type="GO" id="GO:0005737">
    <property type="term" value="C:cytoplasm"/>
    <property type="evidence" value="ECO:0007669"/>
    <property type="project" value="UniProtKB-KW"/>
</dbReference>
<dbReference type="GO" id="GO:0042729">
    <property type="term" value="C:DASH complex"/>
    <property type="evidence" value="ECO:0000314"/>
    <property type="project" value="UniProtKB"/>
</dbReference>
<dbReference type="GO" id="GO:0000776">
    <property type="term" value="C:kinetochore"/>
    <property type="evidence" value="ECO:0000305"/>
    <property type="project" value="UniProtKB"/>
</dbReference>
<dbReference type="GO" id="GO:0072686">
    <property type="term" value="C:mitotic spindle"/>
    <property type="evidence" value="ECO:0000305"/>
    <property type="project" value="UniProtKB"/>
</dbReference>
<dbReference type="GO" id="GO:0051010">
    <property type="term" value="F:microtubule plus-end binding"/>
    <property type="evidence" value="ECO:0007669"/>
    <property type="project" value="TreeGrafter"/>
</dbReference>
<dbReference type="GO" id="GO:0051315">
    <property type="term" value="P:attachment of mitotic spindle microtubules to kinetochore"/>
    <property type="evidence" value="ECO:0000305"/>
    <property type="project" value="UniProtKB"/>
</dbReference>
<dbReference type="GO" id="GO:0008608">
    <property type="term" value="P:attachment of spindle microtubules to kinetochore"/>
    <property type="evidence" value="ECO:0000250"/>
    <property type="project" value="UniProtKB"/>
</dbReference>
<dbReference type="GO" id="GO:1990976">
    <property type="term" value="P:protein transport along microtubule to mitotic spindle pole body"/>
    <property type="evidence" value="ECO:0000250"/>
    <property type="project" value="UniProtKB"/>
</dbReference>
<dbReference type="InterPro" id="IPR042332">
    <property type="entry name" value="Hsk3"/>
</dbReference>
<dbReference type="InterPro" id="IPR013183">
    <property type="entry name" value="Hsk3-like"/>
</dbReference>
<dbReference type="PANTHER" id="PTHR28289">
    <property type="entry name" value="DASH COMPLEX SUBUNIT HSK3"/>
    <property type="match status" value="1"/>
</dbReference>
<dbReference type="PANTHER" id="PTHR28289:SF1">
    <property type="entry name" value="DASH COMPLEX SUBUNIT HSK3"/>
    <property type="match status" value="1"/>
</dbReference>
<dbReference type="Pfam" id="PF08227">
    <property type="entry name" value="DASH_Hsk3"/>
    <property type="match status" value="1"/>
</dbReference>
<evidence type="ECO:0000250" key="1">
    <source>
        <dbReference type="UniProtKB" id="O94483"/>
    </source>
</evidence>
<evidence type="ECO:0000250" key="2">
    <source>
        <dbReference type="UniProtKB" id="P69852"/>
    </source>
</evidence>
<evidence type="ECO:0000256" key="3">
    <source>
        <dbReference type="SAM" id="MobiDB-lite"/>
    </source>
</evidence>
<evidence type="ECO:0000269" key="4">
    <source>
    </source>
</evidence>
<evidence type="ECO:0000303" key="5">
    <source>
    </source>
</evidence>
<evidence type="ECO:0000305" key="6"/>
<evidence type="ECO:0007744" key="7">
    <source>
        <dbReference type="PDB" id="6CFZ"/>
    </source>
</evidence>
<keyword id="KW-0002">3D-structure</keyword>
<keyword id="KW-0137">Centromere</keyword>
<keyword id="KW-0158">Chromosome</keyword>
<keyword id="KW-0963">Cytoplasm</keyword>
<keyword id="KW-0206">Cytoskeleton</keyword>
<keyword id="KW-0995">Kinetochore</keyword>
<keyword id="KW-0539">Nucleus</keyword>
<proteinExistence type="evidence at protein level"/>
<organism>
    <name type="scientific">Chaetomium thermophilum (strain DSM 1495 / CBS 144.50 / IMI 039719)</name>
    <name type="common">Thermochaetoides thermophila</name>
    <dbReference type="NCBI Taxonomy" id="759272"/>
    <lineage>
        <taxon>Eukaryota</taxon>
        <taxon>Fungi</taxon>
        <taxon>Dikarya</taxon>
        <taxon>Ascomycota</taxon>
        <taxon>Pezizomycotina</taxon>
        <taxon>Sordariomycetes</taxon>
        <taxon>Sordariomycetidae</taxon>
        <taxon>Sordariales</taxon>
        <taxon>Chaetomiaceae</taxon>
        <taxon>Thermochaetoides</taxon>
    </lineage>
</organism>
<feature type="chain" id="PRO_0000459461" description="DASH complex subunit HSK3">
    <location>
        <begin position="1"/>
        <end position="88"/>
    </location>
</feature>
<feature type="region of interest" description="Disordered" evidence="3">
    <location>
        <begin position="1"/>
        <end position="24"/>
    </location>
</feature>
<feature type="compositionally biased region" description="Low complexity" evidence="3">
    <location>
        <begin position="1"/>
        <end position="15"/>
    </location>
</feature>
<reference evidence="7" key="1">
    <citation type="journal article" date="2018" name="Science">
        <title>Structure of the DASH/Dam1 complex shows its role at the yeast kinetochore-microtubule interface.</title>
        <authorList>
            <person name="Jenni S."/>
            <person name="Harrison S.C."/>
        </authorList>
    </citation>
    <scope>STRUCTURE BY ELECTRON MICROSCOPY (4.50 ANGSTROMS) OF 22-77</scope>
    <scope>IDENTIFICATION IN THE DASH COMPLEX</scope>
</reference>
<name>HSK3_CHATD</name>
<accession>C0HM97</accession>
<protein>
    <recommendedName>
        <fullName evidence="5">DASH complex subunit HSK3</fullName>
    </recommendedName>
    <alternativeName>
        <fullName evidence="2">Outer kinetochore protein HSK3</fullName>
    </alternativeName>
</protein>
<comment type="function">
    <text evidence="2">Component of the DASH complex that connects microtubules with kinetochores and couples microtubule depolymerisation to chromosome movement; it is involved in retrieving kinetochores to the spindle poles before their re-orientation on the spindle in early mitosis and allows microtubule depolymerization to pull chromosomes apart and resist detachment during anaphase. Kinetochores, consisting of a centromere-associated inner segment and a microtubule-contacting outer segment, play a crucial role in chromosome segregation by mediating the physical connection between centromeric DNA and microtubules. Kinetochores also serve as an input point for the spindle assembly checkpoint, which delays anaphase until all chromosomes have bioriented on the mitotic spindle.</text>
</comment>
<comment type="subunit">
    <text evidence="1 2 4">Component of the DASH complex consisting of ASK1, DAD1, DAD2, DAD3, DAD4, DAM1, DUO1, HSK3, SPC19 and SPC34, with a stoichiometry of one copy of each subunit per complex (PubMed:29724956). Multiple DASH complexes oligomerize to form a ring that encircles spindle microtubules and organizes the rod-like NDC80 complexes of the outer kinetochore (PubMed:29724956). DASH complex oligomerization strengthens microtubule attachments (By similarity). On cytoplasmic microtubules, DASH complexes appear to form patches instead of rings (By similarity).</text>
</comment>
<comment type="subcellular location">
    <subcellularLocation>
        <location evidence="2">Nucleus</location>
    </subcellularLocation>
    <subcellularLocation>
        <location evidence="2">Cytoplasm</location>
        <location evidence="2">Cytoskeleton</location>
        <location evidence="2">Spindle</location>
    </subcellularLocation>
    <subcellularLocation>
        <location evidence="2">Chromosome</location>
        <location evidence="2">Centromere</location>
        <location evidence="2">Kinetochore</location>
    </subcellularLocation>
</comment>
<comment type="similarity">
    <text evidence="6">Belongs to the DASH complex HSK3 family.</text>
</comment>
<gene>
    <name evidence="5" type="primary">HSK3</name>
</gene>
<sequence>MSSRGSGANAASRQSMTASGGAVKARQLAHLHSQLTQLSHNLATTENLMRMTAVQAEAMRGLGSWHAGLFMAASKVLGEESVQNQQGN</sequence>